<accession>Q9RRX5</accession>
<name>SYFB_DEIRA</name>
<protein>
    <recommendedName>
        <fullName>Phenylalanine--tRNA ligase beta subunit</fullName>
        <ecNumber>6.1.1.20</ecNumber>
    </recommendedName>
    <alternativeName>
        <fullName>Phenylalanyl-tRNA synthetase beta subunit</fullName>
        <shortName>PheRS</shortName>
    </alternativeName>
</protein>
<reference key="1">
    <citation type="journal article" date="1999" name="Science">
        <title>Genome sequence of the radioresistant bacterium Deinococcus radiodurans R1.</title>
        <authorList>
            <person name="White O."/>
            <person name="Eisen J.A."/>
            <person name="Heidelberg J.F."/>
            <person name="Hickey E.K."/>
            <person name="Peterson J.D."/>
            <person name="Dodson R.J."/>
            <person name="Haft D.H."/>
            <person name="Gwinn M.L."/>
            <person name="Nelson W.C."/>
            <person name="Richardson D.L."/>
            <person name="Moffat K.S."/>
            <person name="Qin H."/>
            <person name="Jiang L."/>
            <person name="Pamphile W."/>
            <person name="Crosby M."/>
            <person name="Shen M."/>
            <person name="Vamathevan J.J."/>
            <person name="Lam P."/>
            <person name="McDonald L.A."/>
            <person name="Utterback T.R."/>
            <person name="Zalewski C."/>
            <person name="Makarova K.S."/>
            <person name="Aravind L."/>
            <person name="Daly M.J."/>
            <person name="Minton K.W."/>
            <person name="Fleischmann R.D."/>
            <person name="Ketchum K.A."/>
            <person name="Nelson K.E."/>
            <person name="Salzberg S.L."/>
            <person name="Smith H.O."/>
            <person name="Venter J.C."/>
            <person name="Fraser C.M."/>
        </authorList>
    </citation>
    <scope>NUCLEOTIDE SEQUENCE [LARGE SCALE GENOMIC DNA]</scope>
    <source>
        <strain>ATCC 13939 / DSM 20539 / JCM 16871 / CCUG 27074 / LMG 4051 / NBRC 15346 / NCIMB 9279 / VKM B-1422 / R1</strain>
    </source>
</reference>
<keyword id="KW-0030">Aminoacyl-tRNA synthetase</keyword>
<keyword id="KW-0067">ATP-binding</keyword>
<keyword id="KW-0963">Cytoplasm</keyword>
<keyword id="KW-0436">Ligase</keyword>
<keyword id="KW-0460">Magnesium</keyword>
<keyword id="KW-0479">Metal-binding</keyword>
<keyword id="KW-0547">Nucleotide-binding</keyword>
<keyword id="KW-0648">Protein biosynthesis</keyword>
<keyword id="KW-1185">Reference proteome</keyword>
<keyword id="KW-0694">RNA-binding</keyword>
<keyword id="KW-0820">tRNA-binding</keyword>
<feature type="chain" id="PRO_0000126877" description="Phenylalanine--tRNA ligase beta subunit">
    <location>
        <begin position="1"/>
        <end position="820"/>
    </location>
</feature>
<feature type="domain" description="tRNA-binding">
    <location>
        <begin position="39"/>
        <end position="150"/>
    </location>
</feature>
<feature type="domain" description="B5">
    <location>
        <begin position="435"/>
        <end position="510"/>
    </location>
</feature>
<feature type="domain" description="FDX-ACB">
    <location>
        <begin position="727"/>
        <end position="818"/>
    </location>
</feature>
<feature type="binding site" evidence="1">
    <location>
        <position position="488"/>
    </location>
    <ligand>
        <name>Mg(2+)</name>
        <dbReference type="ChEBI" id="CHEBI:18420"/>
        <note>shared with alpha subunit</note>
    </ligand>
</feature>
<feature type="binding site" evidence="1">
    <location>
        <position position="494"/>
    </location>
    <ligand>
        <name>Mg(2+)</name>
        <dbReference type="ChEBI" id="CHEBI:18420"/>
        <note>shared with alpha subunit</note>
    </ligand>
</feature>
<feature type="binding site" evidence="1">
    <location>
        <position position="497"/>
    </location>
    <ligand>
        <name>Mg(2+)</name>
        <dbReference type="ChEBI" id="CHEBI:18420"/>
        <note>shared with alpha subunit</note>
    </ligand>
</feature>
<feature type="binding site" evidence="1">
    <location>
        <position position="498"/>
    </location>
    <ligand>
        <name>Mg(2+)</name>
        <dbReference type="ChEBI" id="CHEBI:18420"/>
        <note>shared with alpha subunit</note>
    </ligand>
</feature>
<organism>
    <name type="scientific">Deinococcus radiodurans (strain ATCC 13939 / DSM 20539 / JCM 16871 / CCUG 27074 / LMG 4051 / NBRC 15346 / NCIMB 9279 / VKM B-1422 / R1)</name>
    <dbReference type="NCBI Taxonomy" id="243230"/>
    <lineage>
        <taxon>Bacteria</taxon>
        <taxon>Thermotogati</taxon>
        <taxon>Deinococcota</taxon>
        <taxon>Deinococci</taxon>
        <taxon>Deinococcales</taxon>
        <taxon>Deinococcaceae</taxon>
        <taxon>Deinococcus</taxon>
    </lineage>
</organism>
<dbReference type="EC" id="6.1.1.20"/>
<dbReference type="EMBL" id="AE000513">
    <property type="protein sequence ID" value="AAF11903.1"/>
    <property type="molecule type" value="Genomic_DNA"/>
</dbReference>
<dbReference type="PIR" id="C75284">
    <property type="entry name" value="C75284"/>
</dbReference>
<dbReference type="RefSeq" id="NP_296078.1">
    <property type="nucleotide sequence ID" value="NC_001263.1"/>
</dbReference>
<dbReference type="RefSeq" id="WP_010888983.1">
    <property type="nucleotide sequence ID" value="NC_001263.1"/>
</dbReference>
<dbReference type="SMR" id="Q9RRX5"/>
<dbReference type="FunCoup" id="Q9RRX5">
    <property type="interactions" value="429"/>
</dbReference>
<dbReference type="STRING" id="243230.DR_2357"/>
<dbReference type="PaxDb" id="243230-DR_2357"/>
<dbReference type="EnsemblBacteria" id="AAF11903">
    <property type="protein sequence ID" value="AAF11903"/>
    <property type="gene ID" value="DR_2357"/>
</dbReference>
<dbReference type="GeneID" id="69518607"/>
<dbReference type="KEGG" id="dra:DR_2357"/>
<dbReference type="PATRIC" id="fig|243230.17.peg.2591"/>
<dbReference type="eggNOG" id="COG0072">
    <property type="taxonomic scope" value="Bacteria"/>
</dbReference>
<dbReference type="eggNOG" id="COG0073">
    <property type="taxonomic scope" value="Bacteria"/>
</dbReference>
<dbReference type="HOGENOM" id="CLU_016891_0_0_0"/>
<dbReference type="InParanoid" id="Q9RRX5"/>
<dbReference type="OrthoDB" id="9805455at2"/>
<dbReference type="Proteomes" id="UP000002524">
    <property type="component" value="Chromosome 1"/>
</dbReference>
<dbReference type="GO" id="GO:0009328">
    <property type="term" value="C:phenylalanine-tRNA ligase complex"/>
    <property type="evidence" value="ECO:0000318"/>
    <property type="project" value="GO_Central"/>
</dbReference>
<dbReference type="GO" id="GO:0005524">
    <property type="term" value="F:ATP binding"/>
    <property type="evidence" value="ECO:0007669"/>
    <property type="project" value="UniProtKB-UniRule"/>
</dbReference>
<dbReference type="GO" id="GO:0000287">
    <property type="term" value="F:magnesium ion binding"/>
    <property type="evidence" value="ECO:0007669"/>
    <property type="project" value="UniProtKB-UniRule"/>
</dbReference>
<dbReference type="GO" id="GO:0004826">
    <property type="term" value="F:phenylalanine-tRNA ligase activity"/>
    <property type="evidence" value="ECO:0007669"/>
    <property type="project" value="UniProtKB-UniRule"/>
</dbReference>
<dbReference type="GO" id="GO:0000049">
    <property type="term" value="F:tRNA binding"/>
    <property type="evidence" value="ECO:0007669"/>
    <property type="project" value="UniProtKB-KW"/>
</dbReference>
<dbReference type="GO" id="GO:0006432">
    <property type="term" value="P:phenylalanyl-tRNA aminoacylation"/>
    <property type="evidence" value="ECO:0000318"/>
    <property type="project" value="GO_Central"/>
</dbReference>
<dbReference type="CDD" id="cd00769">
    <property type="entry name" value="PheRS_beta_core"/>
    <property type="match status" value="1"/>
</dbReference>
<dbReference type="CDD" id="cd02796">
    <property type="entry name" value="tRNA_bind_bactPheRS"/>
    <property type="match status" value="1"/>
</dbReference>
<dbReference type="FunFam" id="3.30.56.10:FF:000002">
    <property type="entry name" value="Phenylalanine--tRNA ligase beta subunit"/>
    <property type="match status" value="1"/>
</dbReference>
<dbReference type="Gene3D" id="3.30.56.10">
    <property type="match status" value="2"/>
</dbReference>
<dbReference type="Gene3D" id="3.30.930.10">
    <property type="entry name" value="Bira Bifunctional Protein, Domain 2"/>
    <property type="match status" value="1"/>
</dbReference>
<dbReference type="Gene3D" id="3.30.70.380">
    <property type="entry name" value="Ferrodoxin-fold anticodon-binding domain"/>
    <property type="match status" value="1"/>
</dbReference>
<dbReference type="Gene3D" id="2.40.50.140">
    <property type="entry name" value="Nucleic acid-binding proteins"/>
    <property type="match status" value="1"/>
</dbReference>
<dbReference type="Gene3D" id="3.50.40.10">
    <property type="entry name" value="Phenylalanyl-trna Synthetase, Chain B, domain 3"/>
    <property type="match status" value="1"/>
</dbReference>
<dbReference type="HAMAP" id="MF_00283">
    <property type="entry name" value="Phe_tRNA_synth_beta1"/>
    <property type="match status" value="1"/>
</dbReference>
<dbReference type="InterPro" id="IPR045864">
    <property type="entry name" value="aa-tRNA-synth_II/BPL/LPL"/>
</dbReference>
<dbReference type="InterPro" id="IPR005146">
    <property type="entry name" value="B3/B4_tRNA-bd"/>
</dbReference>
<dbReference type="InterPro" id="IPR009061">
    <property type="entry name" value="DNA-bd_dom_put_sf"/>
</dbReference>
<dbReference type="InterPro" id="IPR005121">
    <property type="entry name" value="Fdx_antiC-bd"/>
</dbReference>
<dbReference type="InterPro" id="IPR036690">
    <property type="entry name" value="Fdx_antiC-bd_sf"/>
</dbReference>
<dbReference type="InterPro" id="IPR012340">
    <property type="entry name" value="NA-bd_OB-fold"/>
</dbReference>
<dbReference type="InterPro" id="IPR045060">
    <property type="entry name" value="Phe-tRNA-ligase_IIc_bsu"/>
</dbReference>
<dbReference type="InterPro" id="IPR004532">
    <property type="entry name" value="Phe-tRNA-ligase_IIc_bsu_bact"/>
</dbReference>
<dbReference type="InterPro" id="IPR020825">
    <property type="entry name" value="Phe-tRNA_synthase-like_B3/B4"/>
</dbReference>
<dbReference type="InterPro" id="IPR041616">
    <property type="entry name" value="PheRS_beta_core"/>
</dbReference>
<dbReference type="InterPro" id="IPR002547">
    <property type="entry name" value="tRNA-bd_dom"/>
</dbReference>
<dbReference type="InterPro" id="IPR033714">
    <property type="entry name" value="tRNA_bind_bactPheRS"/>
</dbReference>
<dbReference type="InterPro" id="IPR005147">
    <property type="entry name" value="tRNA_synthase_B5-dom"/>
</dbReference>
<dbReference type="PANTHER" id="PTHR10947:SF0">
    <property type="entry name" value="PHENYLALANINE--TRNA LIGASE BETA SUBUNIT"/>
    <property type="match status" value="1"/>
</dbReference>
<dbReference type="PANTHER" id="PTHR10947">
    <property type="entry name" value="PHENYLALANYL-TRNA SYNTHETASE BETA CHAIN AND LEUCINE-RICH REPEAT-CONTAINING PROTEIN 47"/>
    <property type="match status" value="1"/>
</dbReference>
<dbReference type="Pfam" id="PF03483">
    <property type="entry name" value="B3_4"/>
    <property type="match status" value="2"/>
</dbReference>
<dbReference type="Pfam" id="PF03484">
    <property type="entry name" value="B5"/>
    <property type="match status" value="1"/>
</dbReference>
<dbReference type="Pfam" id="PF03147">
    <property type="entry name" value="FDX-ACB"/>
    <property type="match status" value="1"/>
</dbReference>
<dbReference type="Pfam" id="PF17759">
    <property type="entry name" value="tRNA_synthFbeta"/>
    <property type="match status" value="1"/>
</dbReference>
<dbReference type="SMART" id="SM00873">
    <property type="entry name" value="B3_4"/>
    <property type="match status" value="1"/>
</dbReference>
<dbReference type="SMART" id="SM00874">
    <property type="entry name" value="B5"/>
    <property type="match status" value="1"/>
</dbReference>
<dbReference type="SMART" id="SM00896">
    <property type="entry name" value="FDX-ACB"/>
    <property type="match status" value="1"/>
</dbReference>
<dbReference type="SUPFAM" id="SSF54991">
    <property type="entry name" value="Anticodon-binding domain of PheRS"/>
    <property type="match status" value="1"/>
</dbReference>
<dbReference type="SUPFAM" id="SSF55681">
    <property type="entry name" value="Class II aaRS and biotin synthetases"/>
    <property type="match status" value="1"/>
</dbReference>
<dbReference type="SUPFAM" id="SSF50249">
    <property type="entry name" value="Nucleic acid-binding proteins"/>
    <property type="match status" value="1"/>
</dbReference>
<dbReference type="SUPFAM" id="SSF56037">
    <property type="entry name" value="PheT/TilS domain"/>
    <property type="match status" value="1"/>
</dbReference>
<dbReference type="SUPFAM" id="SSF46955">
    <property type="entry name" value="Putative DNA-binding domain"/>
    <property type="match status" value="1"/>
</dbReference>
<dbReference type="PROSITE" id="PS51483">
    <property type="entry name" value="B5"/>
    <property type="match status" value="1"/>
</dbReference>
<dbReference type="PROSITE" id="PS51447">
    <property type="entry name" value="FDX_ACB"/>
    <property type="match status" value="1"/>
</dbReference>
<dbReference type="PROSITE" id="PS50886">
    <property type="entry name" value="TRBD"/>
    <property type="match status" value="1"/>
</dbReference>
<sequence length="820" mass="86985">MKLPYSWLKELIPDLPPVADLEPTFAHLGLPLEGVEDVPAPVGGVLLVAVKAAEPMEGTQLTKLTLDTGENGEKTIASGAPNAVGLPAGTMVALVTPGTTLGGITYGVRPMQGVESWGMAASAKELGIGESNAGILTFPAGTAAPGTPLRELWPADSVLDVEVTPNRADVLSALGLARDLAAYLNLELKEPQIPAAPTQPGEIRVSLPDRGRVLDRDPQGKLRFGCDHFAARAVSGLQNGPAPLWMQRRVSLAGMRSIDLIVDTSNYVMLELGQPTALYDRRDVAGDGLVVAFGLREGETVKDLLGNTHQVGPEDLLILDAGMSDEPVMTVAEAFASAGQPKEGSHVLGIAGIMGGDHGHVRADTRDVVIESAHFDPVLLRRTSTRLGLKTDAVYRYERGVDPLLAPKAAVRVAELLRAAGGTPEAGQTVVGTPEVPQTITTTGEQIRALLGMHIGTAEMRESLTRLGCTVTGDGDSLTVTPPSWRVDMVIWQDLAEEVARLHGFTELPETLPTLRVHESNIGASAQSEARAELRRTLAGLGFQEVVTYTFTSDEEAQKARAEAPGVRLRNPMTTDRTGMRTALYPSLLRAAGAHPKGERALLFEIGRIFPAAGEQERLGLLMRGDLAARTYQDGVRGDFSVFKGLVQGFAGAVGASFALEQLRGDDVPAALHPGVAGAVVWNGERVGWLGALHPEIAQEFGLKGDTFLMEAALPLPGRDWAFRDPSRAPAAWRDLAVIAPQGVSYGDIVGVLKGAGGELLESVEPFDVFTGEQVGAGNRSVAVRLTYRGAKTLTDEEVDPVFNAQIDAVKARGWAIREK</sequence>
<evidence type="ECO:0000250" key="1"/>
<evidence type="ECO:0000305" key="2"/>
<comment type="catalytic activity">
    <reaction>
        <text>tRNA(Phe) + L-phenylalanine + ATP = L-phenylalanyl-tRNA(Phe) + AMP + diphosphate + H(+)</text>
        <dbReference type="Rhea" id="RHEA:19413"/>
        <dbReference type="Rhea" id="RHEA-COMP:9668"/>
        <dbReference type="Rhea" id="RHEA-COMP:9699"/>
        <dbReference type="ChEBI" id="CHEBI:15378"/>
        <dbReference type="ChEBI" id="CHEBI:30616"/>
        <dbReference type="ChEBI" id="CHEBI:33019"/>
        <dbReference type="ChEBI" id="CHEBI:58095"/>
        <dbReference type="ChEBI" id="CHEBI:78442"/>
        <dbReference type="ChEBI" id="CHEBI:78531"/>
        <dbReference type="ChEBI" id="CHEBI:456215"/>
        <dbReference type="EC" id="6.1.1.20"/>
    </reaction>
</comment>
<comment type="cofactor">
    <cofactor evidence="1">
        <name>Mg(2+)</name>
        <dbReference type="ChEBI" id="CHEBI:18420"/>
    </cofactor>
    <text evidence="1">Binds 2 magnesium ions per tetramer.</text>
</comment>
<comment type="subunit">
    <text evidence="1">Tetramer of two alpha and two beta subunits.</text>
</comment>
<comment type="subcellular location">
    <subcellularLocation>
        <location evidence="1">Cytoplasm</location>
    </subcellularLocation>
</comment>
<comment type="similarity">
    <text evidence="2">Belongs to the phenylalanyl-tRNA synthetase beta subunit family. Type 1 subfamily.</text>
</comment>
<gene>
    <name type="primary">pheT</name>
    <name type="ordered locus">DR_2357</name>
</gene>
<proteinExistence type="inferred from homology"/>